<comment type="function">
    <text evidence="1">Possesses E3 ubiquitin-protein ligase in vitro.</text>
</comment>
<comment type="catalytic activity">
    <reaction>
        <text>S-ubiquitinyl-[E2 ubiquitin-conjugating enzyme]-L-cysteine + [acceptor protein]-L-lysine = [E2 ubiquitin-conjugating enzyme]-L-cysteine + N(6)-ubiquitinyl-[acceptor protein]-L-lysine.</text>
        <dbReference type="EC" id="2.3.2.27"/>
    </reaction>
</comment>
<comment type="pathway">
    <text>Protein modification; protein ubiquitination.</text>
</comment>
<comment type="sequence caution" evidence="2">
    <conflict type="erroneous initiation">
        <sequence resource="EMBL-CDS" id="BAF08293"/>
    </conflict>
    <text>Truncated N-terminus.</text>
</comment>
<comment type="sequence caution" evidence="2">
    <conflict type="erroneous initiation">
        <sequence resource="EMBL-CDS" id="BAG88374"/>
    </conflict>
    <text>Truncated N-terminus.</text>
</comment>
<comment type="sequence caution" evidence="2">
    <conflict type="erroneous initiation">
        <sequence resource="EMBL-CDS" id="EEE56620"/>
    </conflict>
    <text>Truncated N-terminus.</text>
</comment>
<name>PUB04_ORYSJ</name>
<protein>
    <recommendedName>
        <fullName>U-box domain-containing protein 4</fullName>
        <ecNumber>2.3.2.27</ecNumber>
    </recommendedName>
    <alternativeName>
        <fullName>Plant U-box protein 4</fullName>
        <shortName>OsPUB4</shortName>
    </alternativeName>
    <alternativeName>
        <fullName evidence="2">RING-type E3 ubiquitin transferase PUB4</fullName>
    </alternativeName>
</protein>
<proteinExistence type="evidence at transcript level"/>
<accession>Q6EUK7</accession>
<accession>B7E7M7</accession>
<accession>Q0E2J5</accession>
<evidence type="ECO:0000269" key="1">
    <source>
    </source>
</evidence>
<evidence type="ECO:0000305" key="2"/>
<keyword id="KW-1185">Reference proteome</keyword>
<keyword id="KW-0677">Repeat</keyword>
<keyword id="KW-0808">Transferase</keyword>
<keyword id="KW-0833">Ubl conjugation pathway</keyword>
<sequence length="728" mass="78162">MAAAASASSPVEFLLRRPAPRRRRLPLAGAFFAPTGLAGATLLRAVASLAASLVAGARPPSQRRNVDALARRLALLSAILESILLDTAAAGAFSDAANLCFRELYVVLFRAELLVSYVASAGRAWALLRSPHLAASFRDLDAELAVVLDVLPAASLRLSHDATGLLDLLRAHCRCRAPAQYHDPDEAALRERLMDALRQFDLGQPPDHPSLQSLLADMGISTAASCRAEIDYLEEQILSQEEDTDLPLVGSVLALLRYCLFAVFDPSNAKALRDWPLSGNRQRLLSIGGGDDTSFSVPKEFSCPISLDLMRDPVVASTGQTYDRPSIIQWIEEGHSTCPNSGQTLADHRLVPNRALRSLISQWCGVYGLQYDSPESNEGMAECVAASCSSRAAMEANKATARILVRMLEDGSENVKAVAAKEIRLLAKTGKQNRAFIADLGAIPLLCRLLLSNDWMAQENAVTALLNLSIFEPNKGRIMEQEGCLRLIVGVLQNGWTTEAKENAAATLFSLSVVHNFKKLIMNEPGAVEELASMLTKGTSRGKKDAVMALFNLSTHPESSARMLESCAVVALIQSLRNDTVSEEAAGALALLMKQPSIVHLVGSSETVITSLVGLMRRGTPKGKENAVSALYEICRRGGSALVQRVAKIPGLNTVIQTITLNGTKRAKKKASLIVKMCQRSQMPSAMALGSTLTVVDRSLVGNNTLRRAASFGSGELSNPISISVQVP</sequence>
<dbReference type="EC" id="2.3.2.27"/>
<dbReference type="EMBL" id="AP004030">
    <property type="protein sequence ID" value="BAD27662.1"/>
    <property type="molecule type" value="Genomic_DNA"/>
</dbReference>
<dbReference type="EMBL" id="AP008208">
    <property type="protein sequence ID" value="BAF08293.1"/>
    <property type="status" value="ALT_INIT"/>
    <property type="molecule type" value="Genomic_DNA"/>
</dbReference>
<dbReference type="EMBL" id="AP014958">
    <property type="status" value="NOT_ANNOTATED_CDS"/>
    <property type="molecule type" value="Genomic_DNA"/>
</dbReference>
<dbReference type="EMBL" id="CM000139">
    <property type="protein sequence ID" value="EEE56620.1"/>
    <property type="status" value="ALT_INIT"/>
    <property type="molecule type" value="Genomic_DNA"/>
</dbReference>
<dbReference type="EMBL" id="AK062592">
    <property type="protein sequence ID" value="BAG88374.1"/>
    <property type="status" value="ALT_INIT"/>
    <property type="molecule type" value="mRNA"/>
</dbReference>
<dbReference type="RefSeq" id="XP_015625965.1">
    <property type="nucleotide sequence ID" value="XM_015770479.1"/>
</dbReference>
<dbReference type="SMR" id="Q6EUK7"/>
<dbReference type="FunCoup" id="Q6EUK7">
    <property type="interactions" value="2329"/>
</dbReference>
<dbReference type="STRING" id="39947.Q6EUK7"/>
<dbReference type="PaxDb" id="39947-Q6EUK7"/>
<dbReference type="EnsemblPlants" id="Os02t0234300-01">
    <property type="protein sequence ID" value="Os02t0234300-01"/>
    <property type="gene ID" value="Os02g0234300"/>
</dbReference>
<dbReference type="Gramene" id="Os02t0234300-01">
    <property type="protein sequence ID" value="Os02t0234300-01"/>
    <property type="gene ID" value="Os02g0234300"/>
</dbReference>
<dbReference type="KEGG" id="dosa:Os02g0234300"/>
<dbReference type="eggNOG" id="KOG0167">
    <property type="taxonomic scope" value="Eukaryota"/>
</dbReference>
<dbReference type="HOGENOM" id="CLU_006348_5_2_1"/>
<dbReference type="InParanoid" id="Q6EUK7"/>
<dbReference type="OrthoDB" id="629492at2759"/>
<dbReference type="UniPathway" id="UPA00143"/>
<dbReference type="Proteomes" id="UP000000763">
    <property type="component" value="Chromosome 2"/>
</dbReference>
<dbReference type="Proteomes" id="UP000007752">
    <property type="component" value="Chromosome 2"/>
</dbReference>
<dbReference type="Proteomes" id="UP000059680">
    <property type="component" value="Chromosome 2"/>
</dbReference>
<dbReference type="GO" id="GO:0005737">
    <property type="term" value="C:cytoplasm"/>
    <property type="evidence" value="ECO:0000318"/>
    <property type="project" value="GO_Central"/>
</dbReference>
<dbReference type="GO" id="GO:0005634">
    <property type="term" value="C:nucleus"/>
    <property type="evidence" value="ECO:0000318"/>
    <property type="project" value="GO_Central"/>
</dbReference>
<dbReference type="GO" id="GO:0004842">
    <property type="term" value="F:ubiquitin-protein transferase activity"/>
    <property type="evidence" value="ECO:0000314"/>
    <property type="project" value="UniProtKB"/>
</dbReference>
<dbReference type="GO" id="GO:0016567">
    <property type="term" value="P:protein ubiquitination"/>
    <property type="evidence" value="ECO:0000314"/>
    <property type="project" value="UniProtKB"/>
</dbReference>
<dbReference type="CDD" id="cd16664">
    <property type="entry name" value="RING-Ubox_PUB"/>
    <property type="match status" value="1"/>
</dbReference>
<dbReference type="FunFam" id="1.25.10.10:FF:000423">
    <property type="entry name" value="RING-type E3 ubiquitin transferase"/>
    <property type="match status" value="1"/>
</dbReference>
<dbReference type="FunFam" id="3.30.40.10:FF:000455">
    <property type="entry name" value="RING-type E3 ubiquitin transferase"/>
    <property type="match status" value="1"/>
</dbReference>
<dbReference type="Gene3D" id="1.25.10.10">
    <property type="entry name" value="Leucine-rich Repeat Variant"/>
    <property type="match status" value="1"/>
</dbReference>
<dbReference type="Gene3D" id="3.30.40.10">
    <property type="entry name" value="Zinc/RING finger domain, C3HC4 (zinc finger)"/>
    <property type="match status" value="1"/>
</dbReference>
<dbReference type="InterPro" id="IPR011989">
    <property type="entry name" value="ARM-like"/>
</dbReference>
<dbReference type="InterPro" id="IPR016024">
    <property type="entry name" value="ARM-type_fold"/>
</dbReference>
<dbReference type="InterPro" id="IPR000225">
    <property type="entry name" value="Armadillo"/>
</dbReference>
<dbReference type="InterPro" id="IPR045210">
    <property type="entry name" value="RING-Ubox_PUB"/>
</dbReference>
<dbReference type="InterPro" id="IPR003613">
    <property type="entry name" value="Ubox_domain"/>
</dbReference>
<dbReference type="InterPro" id="IPR013083">
    <property type="entry name" value="Znf_RING/FYVE/PHD"/>
</dbReference>
<dbReference type="PANTHER" id="PTHR23315">
    <property type="entry name" value="U BOX DOMAIN-CONTAINING"/>
    <property type="match status" value="1"/>
</dbReference>
<dbReference type="PANTHER" id="PTHR23315:SF266">
    <property type="entry name" value="U-BOX DOMAIN-CONTAINING PROTEIN 17"/>
    <property type="match status" value="1"/>
</dbReference>
<dbReference type="Pfam" id="PF00514">
    <property type="entry name" value="Arm"/>
    <property type="match status" value="1"/>
</dbReference>
<dbReference type="Pfam" id="PF04564">
    <property type="entry name" value="U-box"/>
    <property type="match status" value="1"/>
</dbReference>
<dbReference type="SMART" id="SM00185">
    <property type="entry name" value="ARM"/>
    <property type="match status" value="5"/>
</dbReference>
<dbReference type="SMART" id="SM00504">
    <property type="entry name" value="Ubox"/>
    <property type="match status" value="1"/>
</dbReference>
<dbReference type="SUPFAM" id="SSF48371">
    <property type="entry name" value="ARM repeat"/>
    <property type="match status" value="1"/>
</dbReference>
<dbReference type="SUPFAM" id="SSF57850">
    <property type="entry name" value="RING/U-box"/>
    <property type="match status" value="1"/>
</dbReference>
<dbReference type="PROSITE" id="PS50176">
    <property type="entry name" value="ARM_REPEAT"/>
    <property type="match status" value="1"/>
</dbReference>
<dbReference type="PROSITE" id="PS51698">
    <property type="entry name" value="U_BOX"/>
    <property type="match status" value="1"/>
</dbReference>
<feature type="chain" id="PRO_0000397689" description="U-box domain-containing protein 4">
    <location>
        <begin position="1"/>
        <end position="728"/>
    </location>
</feature>
<feature type="domain" description="U-box">
    <location>
        <begin position="296"/>
        <end position="370"/>
    </location>
</feature>
<feature type="repeat" description="ARM 1">
    <location>
        <begin position="441"/>
        <end position="483"/>
    </location>
</feature>
<feature type="repeat" description="ARM 2">
    <location>
        <begin position="526"/>
        <end position="568"/>
    </location>
</feature>
<organism>
    <name type="scientific">Oryza sativa subsp. japonica</name>
    <name type="common">Rice</name>
    <dbReference type="NCBI Taxonomy" id="39947"/>
    <lineage>
        <taxon>Eukaryota</taxon>
        <taxon>Viridiplantae</taxon>
        <taxon>Streptophyta</taxon>
        <taxon>Embryophyta</taxon>
        <taxon>Tracheophyta</taxon>
        <taxon>Spermatophyta</taxon>
        <taxon>Magnoliopsida</taxon>
        <taxon>Liliopsida</taxon>
        <taxon>Poales</taxon>
        <taxon>Poaceae</taxon>
        <taxon>BOP clade</taxon>
        <taxon>Oryzoideae</taxon>
        <taxon>Oryzeae</taxon>
        <taxon>Oryzinae</taxon>
        <taxon>Oryza</taxon>
        <taxon>Oryza sativa</taxon>
    </lineage>
</organism>
<gene>
    <name type="primary">PUB4</name>
    <name type="ordered locus">Os02g0234300</name>
    <name type="ordered locus">LOC_Os02g13960</name>
    <name type="ORF">OJ1145_E05.4</name>
    <name type="ORF">OsJ_06003</name>
</gene>
<reference key="1">
    <citation type="journal article" date="2005" name="Nature">
        <title>The map-based sequence of the rice genome.</title>
        <authorList>
            <consortium name="International rice genome sequencing project (IRGSP)"/>
        </authorList>
    </citation>
    <scope>NUCLEOTIDE SEQUENCE [LARGE SCALE GENOMIC DNA]</scope>
    <source>
        <strain>cv. Nipponbare</strain>
    </source>
</reference>
<reference key="2">
    <citation type="journal article" date="2008" name="Nucleic Acids Res.">
        <title>The rice annotation project database (RAP-DB): 2008 update.</title>
        <authorList>
            <consortium name="The rice annotation project (RAP)"/>
        </authorList>
    </citation>
    <scope>GENOME REANNOTATION</scope>
    <source>
        <strain>cv. Nipponbare</strain>
    </source>
</reference>
<reference key="3">
    <citation type="journal article" date="2013" name="Rice">
        <title>Improvement of the Oryza sativa Nipponbare reference genome using next generation sequence and optical map data.</title>
        <authorList>
            <person name="Kawahara Y."/>
            <person name="de la Bastide M."/>
            <person name="Hamilton J.P."/>
            <person name="Kanamori H."/>
            <person name="McCombie W.R."/>
            <person name="Ouyang S."/>
            <person name="Schwartz D.C."/>
            <person name="Tanaka T."/>
            <person name="Wu J."/>
            <person name="Zhou S."/>
            <person name="Childs K.L."/>
            <person name="Davidson R.M."/>
            <person name="Lin H."/>
            <person name="Quesada-Ocampo L."/>
            <person name="Vaillancourt B."/>
            <person name="Sakai H."/>
            <person name="Lee S.S."/>
            <person name="Kim J."/>
            <person name="Numa H."/>
            <person name="Itoh T."/>
            <person name="Buell C.R."/>
            <person name="Matsumoto T."/>
        </authorList>
    </citation>
    <scope>GENOME REANNOTATION</scope>
    <source>
        <strain>cv. Nipponbare</strain>
    </source>
</reference>
<reference key="4">
    <citation type="journal article" date="2005" name="PLoS Biol.">
        <title>The genomes of Oryza sativa: a history of duplications.</title>
        <authorList>
            <person name="Yu J."/>
            <person name="Wang J."/>
            <person name="Lin W."/>
            <person name="Li S."/>
            <person name="Li H."/>
            <person name="Zhou J."/>
            <person name="Ni P."/>
            <person name="Dong W."/>
            <person name="Hu S."/>
            <person name="Zeng C."/>
            <person name="Zhang J."/>
            <person name="Zhang Y."/>
            <person name="Li R."/>
            <person name="Xu Z."/>
            <person name="Li S."/>
            <person name="Li X."/>
            <person name="Zheng H."/>
            <person name="Cong L."/>
            <person name="Lin L."/>
            <person name="Yin J."/>
            <person name="Geng J."/>
            <person name="Li G."/>
            <person name="Shi J."/>
            <person name="Liu J."/>
            <person name="Lv H."/>
            <person name="Li J."/>
            <person name="Wang J."/>
            <person name="Deng Y."/>
            <person name="Ran L."/>
            <person name="Shi X."/>
            <person name="Wang X."/>
            <person name="Wu Q."/>
            <person name="Li C."/>
            <person name="Ren X."/>
            <person name="Wang J."/>
            <person name="Wang X."/>
            <person name="Li D."/>
            <person name="Liu D."/>
            <person name="Zhang X."/>
            <person name="Ji Z."/>
            <person name="Zhao W."/>
            <person name="Sun Y."/>
            <person name="Zhang Z."/>
            <person name="Bao J."/>
            <person name="Han Y."/>
            <person name="Dong L."/>
            <person name="Ji J."/>
            <person name="Chen P."/>
            <person name="Wu S."/>
            <person name="Liu J."/>
            <person name="Xiao Y."/>
            <person name="Bu D."/>
            <person name="Tan J."/>
            <person name="Yang L."/>
            <person name="Ye C."/>
            <person name="Zhang J."/>
            <person name="Xu J."/>
            <person name="Zhou Y."/>
            <person name="Yu Y."/>
            <person name="Zhang B."/>
            <person name="Zhuang S."/>
            <person name="Wei H."/>
            <person name="Liu B."/>
            <person name="Lei M."/>
            <person name="Yu H."/>
            <person name="Li Y."/>
            <person name="Xu H."/>
            <person name="Wei S."/>
            <person name="He X."/>
            <person name="Fang L."/>
            <person name="Zhang Z."/>
            <person name="Zhang Y."/>
            <person name="Huang X."/>
            <person name="Su Z."/>
            <person name="Tong W."/>
            <person name="Li J."/>
            <person name="Tong Z."/>
            <person name="Li S."/>
            <person name="Ye J."/>
            <person name="Wang L."/>
            <person name="Fang L."/>
            <person name="Lei T."/>
            <person name="Chen C.-S."/>
            <person name="Chen H.-C."/>
            <person name="Xu Z."/>
            <person name="Li H."/>
            <person name="Huang H."/>
            <person name="Zhang F."/>
            <person name="Xu H."/>
            <person name="Li N."/>
            <person name="Zhao C."/>
            <person name="Li S."/>
            <person name="Dong L."/>
            <person name="Huang Y."/>
            <person name="Li L."/>
            <person name="Xi Y."/>
            <person name="Qi Q."/>
            <person name="Li W."/>
            <person name="Zhang B."/>
            <person name="Hu W."/>
            <person name="Zhang Y."/>
            <person name="Tian X."/>
            <person name="Jiao Y."/>
            <person name="Liang X."/>
            <person name="Jin J."/>
            <person name="Gao L."/>
            <person name="Zheng W."/>
            <person name="Hao B."/>
            <person name="Liu S.-M."/>
            <person name="Wang W."/>
            <person name="Yuan L."/>
            <person name="Cao M."/>
            <person name="McDermott J."/>
            <person name="Samudrala R."/>
            <person name="Wang J."/>
            <person name="Wong G.K.-S."/>
            <person name="Yang H."/>
        </authorList>
    </citation>
    <scope>NUCLEOTIDE SEQUENCE [LARGE SCALE GENOMIC DNA]</scope>
    <source>
        <strain>cv. Nipponbare</strain>
    </source>
</reference>
<reference key="5">
    <citation type="journal article" date="2003" name="Science">
        <title>Collection, mapping, and annotation of over 28,000 cDNA clones from japonica rice.</title>
        <authorList>
            <consortium name="The rice full-length cDNA consortium"/>
        </authorList>
    </citation>
    <scope>NUCLEOTIDE SEQUENCE [LARGE SCALE MRNA] OF 148-728</scope>
    <source>
        <strain>cv. Nipponbare</strain>
    </source>
</reference>
<reference key="6">
    <citation type="journal article" date="2008" name="Mol. Plant">
        <title>Classification, expression pattern, and E3 ligase activity assay of rice U-box-containing proteins.</title>
        <authorList>
            <person name="Zeng L.R."/>
            <person name="Park C.H."/>
            <person name="Venu R.C."/>
            <person name="Gough J."/>
            <person name="Wang G.L."/>
        </authorList>
    </citation>
    <scope>FUNCTION</scope>
    <scope>GENE FAMILY</scope>
    <scope>NOMENCLATURE</scope>
</reference>